<dbReference type="EC" id="3.4.-.-" evidence="8"/>
<dbReference type="EMBL" id="KU645832">
    <property type="protein sequence ID" value="AMR44280.1"/>
    <property type="molecule type" value="Genomic_DNA"/>
</dbReference>
<dbReference type="GO" id="GO:0008236">
    <property type="term" value="F:serine-type peptidase activity"/>
    <property type="evidence" value="ECO:0007669"/>
    <property type="project" value="UniProtKB-KW"/>
</dbReference>
<dbReference type="GO" id="GO:0006508">
    <property type="term" value="P:proteolysis"/>
    <property type="evidence" value="ECO:0007669"/>
    <property type="project" value="UniProtKB-KW"/>
</dbReference>
<dbReference type="Gene3D" id="3.90.226.10">
    <property type="entry name" value="2-enoyl-CoA Hydratase, Chain A, domain 1"/>
    <property type="match status" value="1"/>
</dbReference>
<dbReference type="InterPro" id="IPR029045">
    <property type="entry name" value="ClpP/crotonase-like_dom_sf"/>
</dbReference>
<dbReference type="InterPro" id="IPR056186">
    <property type="entry name" value="PDZ_CPAF-rel"/>
</dbReference>
<dbReference type="InterPro" id="IPR052766">
    <property type="entry name" value="S41A_metabolite_peptidase"/>
</dbReference>
<dbReference type="InterPro" id="IPR005151">
    <property type="entry name" value="Tail-specific_protease"/>
</dbReference>
<dbReference type="PANTHER" id="PTHR37049">
    <property type="entry name" value="PEPTIDASE S41 FAMILY PROTEIN"/>
    <property type="match status" value="1"/>
</dbReference>
<dbReference type="PANTHER" id="PTHR37049:SF4">
    <property type="entry name" value="RHODANESE DOMAIN-CONTAINING PROTEIN"/>
    <property type="match status" value="1"/>
</dbReference>
<dbReference type="Pfam" id="PF23658">
    <property type="entry name" value="PDZ_CPAF_rel"/>
    <property type="match status" value="1"/>
</dbReference>
<dbReference type="Pfam" id="PF03572">
    <property type="entry name" value="Peptidase_S41"/>
    <property type="match status" value="1"/>
</dbReference>
<dbReference type="SUPFAM" id="SSF52096">
    <property type="entry name" value="ClpP/crotonase"/>
    <property type="match status" value="1"/>
</dbReference>
<reference key="1">
    <citation type="journal article" date="2016" name="Proc. Natl. Acad. Sci. U.S.A.">
        <title>Biosynthetic investigation of phomopsins reveals a widespread pathway for ribosomal natural products in Ascomycetes.</title>
        <authorList>
            <person name="Ding W."/>
            <person name="Liu W.Q."/>
            <person name="Jia Y."/>
            <person name="Li Y."/>
            <person name="van der Donk W.A."/>
            <person name="Zhang Q."/>
        </authorList>
    </citation>
    <scope>NUCLEOTIDE SEQUENCE [GENOMIC DNA]</scope>
    <scope>FUNCTION</scope>
    <source>
        <strain>ATCC 26115 / IMI 115107 / C 1557</strain>
    </source>
</reference>
<reference key="2">
    <citation type="journal article" date="2021" name="Angew. Chem. Int. Ed.">
        <title>Biosynthetic studies of phomopsins unveil posttranslational installation of dehydroamino acids by ustYa family proteins.</title>
        <authorList>
            <person name="Sogahata K."/>
            <person name="Ozaki T."/>
            <person name="Igarashi Y."/>
            <person name="Naganuma Y."/>
            <person name="Liu C."/>
            <person name="Minami A."/>
            <person name="Oikawa H."/>
        </authorList>
    </citation>
    <scope>NOMENCLATURE</scope>
    <scope>FUNCTION</scope>
    <source>
        <strain>ATCC 26115 / IMI 115107 / C 1557</strain>
    </source>
</reference>
<accession>A0A142I728</accession>
<evidence type="ECO:0000255" key="1"/>
<evidence type="ECO:0000255" key="2">
    <source>
        <dbReference type="PROSITE-ProRule" id="PRU00498"/>
    </source>
</evidence>
<evidence type="ECO:0000269" key="3">
    <source>
    </source>
</evidence>
<evidence type="ECO:0000269" key="4">
    <source>
    </source>
</evidence>
<evidence type="ECO:0000303" key="5">
    <source>
    </source>
</evidence>
<evidence type="ECO:0000303" key="6">
    <source>
    </source>
</evidence>
<evidence type="ECO:0000305" key="7"/>
<evidence type="ECO:0000305" key="8">
    <source>
    </source>
</evidence>
<feature type="signal peptide" evidence="1">
    <location>
        <begin position="1"/>
        <end position="27"/>
    </location>
</feature>
<feature type="chain" id="PRO_0000458389" description="Peptidase S41 family protein phomP1'">
    <location>
        <begin position="28"/>
        <end position="666"/>
    </location>
</feature>
<feature type="region of interest" description="Peptidase S41 domain" evidence="1">
    <location>
        <begin position="303"/>
        <end position="504"/>
    </location>
</feature>
<feature type="glycosylation site" description="N-linked (GlcNAc...) asparagine" evidence="2">
    <location>
        <position position="70"/>
    </location>
</feature>
<feature type="glycosylation site" description="N-linked (GlcNAc...) asparagine" evidence="2">
    <location>
        <position position="214"/>
    </location>
</feature>
<feature type="glycosylation site" description="N-linked (GlcNAc...) asparagine" evidence="2">
    <location>
        <position position="234"/>
    </location>
</feature>
<feature type="glycosylation site" description="N-linked (GlcNAc...) asparagine" evidence="2">
    <location>
        <position position="555"/>
    </location>
</feature>
<feature type="glycosylation site" description="N-linked (GlcNAc...) asparagine" evidence="2">
    <location>
        <position position="612"/>
    </location>
</feature>
<sequence>MSSFLVQTAVVRLFLLGVVFWFPFALSSSCAEIASKFGTWKSEGDAPPSYLSPTVDLLDGLDRIRKKIINGTISSQYDFDNLLHRLISQANDGHLQIGLCSREIFRFQHGTPLTSVSRDGLDLPQLYVHSDAVIMHSGQVEAISPVVEINGLEADYYLQSRIAVTLGYQDPDARYNALFPSPSAGFTGTYSAGAWASNSGEWPGSAVLTIRFANGTRLEVKPTATWPATNGPMNYTDGQALFEAACLPGTSSKYIFGSFPGMYLGLPAYELPRSGPSVFPAPTIKDSNGLVRLYSLEDAALQDVAVLQITSFRMGGEDSREFSATIRQSLDWASSHGKTKLLLDLSGNGGGNVIPGFDLFRMLFPDEPIRSETRFRSTELLDVLGQAFSAEYRGADAKEILDPPLAAQNAVSPDQEENVFGSWKDLFGPDPNYEGDSMSNAYAVFSFAAASTTFEPISGYGSAPLAIKTRLFEPQSIAVVTDGRCSSTCAIVVGLLQAQGVRTVTFGGRPRKAPMQAVGGVKGGQRWSLRTISRHIKTARELLAKQYTSTAAQANSTRRLAVGHLLQKLNDLAPPALPLIPRMEDNEWEFALRFDTYGQSSVNFRDAYVPANETTPWQFIYEAADCRMFLTPENVVEPASRWNSAARAMFGGREMGSEKCVDYVSV</sequence>
<comment type="function">
    <text evidence="3 4 8">Peptidase S41 family protein; part of the gene cluster that mediates the biosynthesis of the phomopsins, a group of hexapeptide mycotoxins which infects lupins and causes lupinosis disease in livestock (PubMed:26979951, PubMed:34608734). Within the pathway, phomP1 and phomP1' are probably involved in the processing of the phomA and phomA' precursors (Probable). The pathway starts with the processing of the precursor phomA by several endopeptidases including kexin proteases as well as the cluster-specific S41 family peptidase phomP1 and the oligopeptidase phomG to produce 10 identical copies of the hexapeptide Tyr-Val-Ile-Pro-Ile-Asp. After being excised from the precursor peptide, the core peptides are cyclized and modified post-translationally by enzymes encoded within the gene cluster. The timing and order of proteolysis of the phomA precursor and PTMs are still unknown. Two tyrosinase-like enzymes, phomQ1 and phomQ2, catalyze the chlorination and hydroxylation of Tyr, respectively. PhomYb, is proposed to be involved in the construction of the macrocyclic structure. The other 4 ustYa family proteins may be involved in PTMs that generate the unique structure of phomopsin A. PhomYa is required for the hydroxylation of C-beta of Tyr. PhomYc, phomYd, and phomYe are responsible for the biosynthesis of 2,3-dehydroisoleucine (dIle), 2,3-dehydroaspartic acid (dAsp), and 3,4-dehydroproline (dPro), respectively. While dIle formation by phomYc is indispensable for the installation of dAsp by phomYd, the order of the other PTMs have not been elucidated yet. Most of the biosynthetic enzymes likely have broad substrate specificity, and thus, there might be a metabolic grid from a precursor to phomopsin A. The enzyme(s) responsible for the biosynthesis of 3,4-dehydrovaline (dVal) have also not been identified yet. Finally, phomM acts as an S-adenosylmethionine-dependent alpha-N-methyltransferase that catalyzes two successive N-methylation reactions, converting N-desmethyl-phomopsin A to phomopsin A and phomopsin A further to an N,N-dimethylated congener called phomopsin E (Probable).</text>
</comment>
<comment type="pathway">
    <text evidence="8">Mycotoxin biosynthesis.</text>
</comment>
<comment type="similarity">
    <text evidence="7">Belongs to the peptidase S41A family.</text>
</comment>
<keyword id="KW-0325">Glycoprotein</keyword>
<keyword id="KW-0378">Hydrolase</keyword>
<keyword id="KW-0645">Protease</keyword>
<keyword id="KW-0720">Serine protease</keyword>
<keyword id="KW-0732">Signal</keyword>
<keyword id="KW-0843">Virulence</keyword>
<protein>
    <recommendedName>
        <fullName evidence="6">Peptidase S41 family protein phomP1'</fullName>
        <ecNumber evidence="8">3.4.-.-</ecNumber>
    </recommendedName>
    <alternativeName>
        <fullName evidence="6">Phomopsin biosynthesis cluster protein P1'</fullName>
    </alternativeName>
</protein>
<name>PHP12_DIALO</name>
<proteinExistence type="inferred from homology"/>
<organism>
    <name type="scientific">Diaporthe leptostromiformis</name>
    <name type="common">Lupinosis disease fungus</name>
    <name type="synonym">Phomopsis leptostromiformis</name>
    <dbReference type="NCBI Taxonomy" id="291059"/>
    <lineage>
        <taxon>Eukaryota</taxon>
        <taxon>Fungi</taxon>
        <taxon>Dikarya</taxon>
        <taxon>Ascomycota</taxon>
        <taxon>Pezizomycotina</taxon>
        <taxon>Sordariomycetes</taxon>
        <taxon>Sordariomycetidae</taxon>
        <taxon>Diaporthales</taxon>
        <taxon>Diaporthaceae</taxon>
        <taxon>Diaporthe</taxon>
    </lineage>
</organism>
<gene>
    <name evidence="6" type="primary">phomP1'</name>
    <name evidence="5" type="synonym">phomP1</name>
</gene>